<evidence type="ECO:0000255" key="1">
    <source>
        <dbReference type="HAMAP-Rule" id="MF_00017"/>
    </source>
</evidence>
<evidence type="ECO:0000305" key="2"/>
<feature type="chain" id="PRO_0000322947" description="Recombination protein RecR">
    <location>
        <begin position="1"/>
        <end position="201"/>
    </location>
</feature>
<feature type="domain" description="Toprim" evidence="1">
    <location>
        <begin position="82"/>
        <end position="177"/>
    </location>
</feature>
<feature type="zinc finger region" description="C4-type" evidence="1">
    <location>
        <begin position="59"/>
        <end position="74"/>
    </location>
</feature>
<proteinExistence type="inferred from homology"/>
<name>RECR_RICM5</name>
<accession>A8F1L4</accession>
<gene>
    <name evidence="1" type="primary">recR</name>
    <name type="ordered locus">RMA_0623</name>
</gene>
<dbReference type="EMBL" id="CP000683">
    <property type="protein sequence ID" value="ABV84800.1"/>
    <property type="status" value="ALT_INIT"/>
    <property type="molecule type" value="Genomic_DNA"/>
</dbReference>
<dbReference type="RefSeq" id="WP_041404668.1">
    <property type="nucleotide sequence ID" value="NC_009900.1"/>
</dbReference>
<dbReference type="SMR" id="A8F1L4"/>
<dbReference type="KEGG" id="rms:RMA_0623"/>
<dbReference type="HOGENOM" id="CLU_060739_1_1_5"/>
<dbReference type="Proteomes" id="UP000001311">
    <property type="component" value="Chromosome"/>
</dbReference>
<dbReference type="GO" id="GO:0003677">
    <property type="term" value="F:DNA binding"/>
    <property type="evidence" value="ECO:0007669"/>
    <property type="project" value="UniProtKB-UniRule"/>
</dbReference>
<dbReference type="GO" id="GO:0008270">
    <property type="term" value="F:zinc ion binding"/>
    <property type="evidence" value="ECO:0007669"/>
    <property type="project" value="UniProtKB-KW"/>
</dbReference>
<dbReference type="GO" id="GO:0006310">
    <property type="term" value="P:DNA recombination"/>
    <property type="evidence" value="ECO:0007669"/>
    <property type="project" value="UniProtKB-UniRule"/>
</dbReference>
<dbReference type="GO" id="GO:0006281">
    <property type="term" value="P:DNA repair"/>
    <property type="evidence" value="ECO:0007669"/>
    <property type="project" value="UniProtKB-UniRule"/>
</dbReference>
<dbReference type="CDD" id="cd01025">
    <property type="entry name" value="TOPRIM_recR"/>
    <property type="match status" value="1"/>
</dbReference>
<dbReference type="Gene3D" id="3.40.1360.10">
    <property type="match status" value="1"/>
</dbReference>
<dbReference type="Gene3D" id="1.10.8.420">
    <property type="entry name" value="RecR Domain 1"/>
    <property type="match status" value="1"/>
</dbReference>
<dbReference type="HAMAP" id="MF_00017">
    <property type="entry name" value="RecR"/>
    <property type="match status" value="1"/>
</dbReference>
<dbReference type="InterPro" id="IPR000093">
    <property type="entry name" value="DNA_Rcmb_RecR"/>
</dbReference>
<dbReference type="InterPro" id="IPR023627">
    <property type="entry name" value="Rcmb_RecR"/>
</dbReference>
<dbReference type="InterPro" id="IPR015967">
    <property type="entry name" value="Rcmb_RecR_Znf"/>
</dbReference>
<dbReference type="InterPro" id="IPR006171">
    <property type="entry name" value="TOPRIM_dom"/>
</dbReference>
<dbReference type="InterPro" id="IPR034137">
    <property type="entry name" value="TOPRIM_RecR"/>
</dbReference>
<dbReference type="NCBIfam" id="TIGR00615">
    <property type="entry name" value="recR"/>
    <property type="match status" value="1"/>
</dbReference>
<dbReference type="PANTHER" id="PTHR30446">
    <property type="entry name" value="RECOMBINATION PROTEIN RECR"/>
    <property type="match status" value="1"/>
</dbReference>
<dbReference type="PANTHER" id="PTHR30446:SF0">
    <property type="entry name" value="RECOMBINATION PROTEIN RECR"/>
    <property type="match status" value="1"/>
</dbReference>
<dbReference type="Pfam" id="PF21175">
    <property type="entry name" value="RecR_C"/>
    <property type="match status" value="1"/>
</dbReference>
<dbReference type="Pfam" id="PF21176">
    <property type="entry name" value="RecR_HhH"/>
    <property type="match status" value="1"/>
</dbReference>
<dbReference type="Pfam" id="PF02132">
    <property type="entry name" value="RecR_ZnF"/>
    <property type="match status" value="1"/>
</dbReference>
<dbReference type="Pfam" id="PF13662">
    <property type="entry name" value="Toprim_4"/>
    <property type="match status" value="1"/>
</dbReference>
<dbReference type="SMART" id="SM00493">
    <property type="entry name" value="TOPRIM"/>
    <property type="match status" value="1"/>
</dbReference>
<dbReference type="SUPFAM" id="SSF111304">
    <property type="entry name" value="Recombination protein RecR"/>
    <property type="match status" value="1"/>
</dbReference>
<dbReference type="PROSITE" id="PS01300">
    <property type="entry name" value="RECR"/>
    <property type="match status" value="1"/>
</dbReference>
<dbReference type="PROSITE" id="PS50880">
    <property type="entry name" value="TOPRIM"/>
    <property type="match status" value="1"/>
</dbReference>
<reference key="1">
    <citation type="journal article" date="2007" name="Genome Res.">
        <title>Lateral gene transfer between obligate intracellular bacteria: evidence from the Rickettsia massiliae genome.</title>
        <authorList>
            <person name="Blanc G."/>
            <person name="Ogata H."/>
            <person name="Robert C."/>
            <person name="Audic S."/>
            <person name="Claverie J.-M."/>
            <person name="Raoult D."/>
        </authorList>
    </citation>
    <scope>NUCLEOTIDE SEQUENCE [LARGE SCALE GENOMIC DNA]</scope>
    <source>
        <strain>Mtu5</strain>
    </source>
</reference>
<keyword id="KW-0227">DNA damage</keyword>
<keyword id="KW-0233">DNA recombination</keyword>
<keyword id="KW-0234">DNA repair</keyword>
<keyword id="KW-0479">Metal-binding</keyword>
<keyword id="KW-0862">Zinc</keyword>
<keyword id="KW-0863">Zinc-finger</keyword>
<protein>
    <recommendedName>
        <fullName evidence="1">Recombination protein RecR</fullName>
    </recommendedName>
</protein>
<organism>
    <name type="scientific">Rickettsia massiliae (strain Mtu5)</name>
    <dbReference type="NCBI Taxonomy" id="416276"/>
    <lineage>
        <taxon>Bacteria</taxon>
        <taxon>Pseudomonadati</taxon>
        <taxon>Pseudomonadota</taxon>
        <taxon>Alphaproteobacteria</taxon>
        <taxon>Rickettsiales</taxon>
        <taxon>Rickettsiaceae</taxon>
        <taxon>Rickettsieae</taxon>
        <taxon>Rickettsia</taxon>
        <taxon>spotted fever group</taxon>
    </lineage>
</organism>
<comment type="function">
    <text evidence="1">May play a role in DNA repair. It seems to be involved in an RecBC-independent recombinational process of DNA repair. It may act with RecF and RecO.</text>
</comment>
<comment type="similarity">
    <text evidence="1">Belongs to the RecR family.</text>
</comment>
<comment type="sequence caution" evidence="2">
    <conflict type="erroneous initiation">
        <sequence resource="EMBL-CDS" id="ABV84800"/>
    </conflict>
</comment>
<sequence>MNETNDNDIDQLIYLFSKLPGLGSRSARRIALYLLQDKDVRLKSLINNLVEIDKKIVKCKICGNIDTENICRICSSEYRDKSIIAIVETVAELWAMERSGNFKGLYHVLGHNLSAASRQNPSILRLPELLKRCFAENIKEVIIATNSTLEGQTTAYFITEYLKEHPAKISRLASGIPIGGELDYLDEGTVSAAINLRQPFE</sequence>